<comment type="function">
    <text evidence="1 9">As a component of the TREX-2 complex, involved in the export of mRNAs to the cytoplasm through the nuclear pores (By similarity). Through the acetylation of histones, affects the assembly of nucleosomes at immunoglobulin variable region genes and promotes the recruitment and positioning of transcription complex to favor DNA cytosine deaminase AICDA/AID targeting, hence promoting somatic hypermutations (PubMed:23652018).</text>
</comment>
<comment type="catalytic activity">
    <reaction evidence="1">
        <text>L-lysyl-[histone] + acetyl-CoA = N(6)-acetyl-L-lysyl-[histone] + CoA + H(+)</text>
        <dbReference type="Rhea" id="RHEA:21992"/>
        <dbReference type="Rhea" id="RHEA-COMP:9845"/>
        <dbReference type="Rhea" id="RHEA-COMP:11338"/>
        <dbReference type="ChEBI" id="CHEBI:15378"/>
        <dbReference type="ChEBI" id="CHEBI:29969"/>
        <dbReference type="ChEBI" id="CHEBI:57287"/>
        <dbReference type="ChEBI" id="CHEBI:57288"/>
        <dbReference type="ChEBI" id="CHEBI:61930"/>
        <dbReference type="EC" id="2.3.1.48"/>
    </reaction>
    <physiologicalReaction direction="left-to-right" evidence="1">
        <dbReference type="Rhea" id="RHEA:21993"/>
    </physiologicalReaction>
</comment>
<comment type="subunit">
    <text evidence="1 5 8">Component of the nuclear pore complex (NPC)-associated TREX-2 complex (transcription and export complex 2), composed of at least GANP, 2 copies of ENY2, PCID2, SEM1/DSS1, and either centrin CETN2 or centrin CETN3. The TREX-2 complex also associates with ALYREF/ALY (By similarity). Interacts with RNA polymerase II subunit POLR2A and with the transcription elongation factor SUPT5H/SPT5 (By similarity). Interacts (via FG-repeats) with NXF1; this interaction is not mediated by RNA (By similarity). Interacts with nuclear envelope proteins NUP62, NUP153 and RANBP2/NUP358; interaction with NUP153 is required for full localization at the nuclear pore complex (By similarity). Interacts with several RNA helicases, including DHX9, DDX21, and DDX39A/DDX39, and with DNA topoisomerase TOP2A (By similarity). Directly interacts with AICDA/AID (PubMed:20507984). Interacts with the glucocorticoid receptor NR3C1 (By similarity). Interacts with MCM3 (PubMed:10733502).</text>
</comment>
<comment type="subcellular location">
    <subcellularLocation>
        <location evidence="5 8">Cytoplasm</location>
    </subcellularLocation>
    <subcellularLocation>
        <location evidence="5 8">Nucleus</location>
    </subcellularLocation>
    <subcellularLocation>
        <location evidence="1">Nucleus envelope</location>
    </subcellularLocation>
    <subcellularLocation>
        <location evidence="1">Nucleus</location>
        <location evidence="1">Nuclear pore complex</location>
    </subcellularLocation>
    <subcellularLocation>
        <location evidence="1">Nucleus</location>
        <location evidence="1">Nucleoplasm</location>
    </subcellularLocation>
    <subcellularLocation>
        <location evidence="1">Chromosome</location>
    </subcellularLocation>
    <text evidence="1 8 9">In stimulated B-cells, selectively targeted to immunoglobulin gene variable regions (PubMed:20507984). Predominantly located at the nuclear envelope, facing the nucleus interior (By similarity). Localization at the nuclear pore complex requires NUP153, TPR and ALYREF/ALY (By similarity). Also found associated with chromatin (PubMed:23652018). In B-cells, targeted to the immunoglobulin variable region genes (PubMed:20507984, PubMed:23652018).</text>
</comment>
<comment type="tissue specificity">
    <text evidence="5 6">Expressed at low levels in lymphoid organs, including thymus, spleen and lymph nodes (PubMed:10733502). Up-regulated in stimulated B-cells in spleen and Peyer's patch germinal centers (at protein level) (PubMed:11526238).</text>
</comment>
<comment type="induction">
    <text evidence="5 6">Up-regulated in B-cells by CD40 stimulation and bacterial lipopolysaccharide (LPS) (at protein level).</text>
</comment>
<comment type="PTM">
    <text evidence="6">Phosphorylation at Ser-502 is induced in B-cells by CD40-stimulation, but not by bacterial lipopolysaccharide (LPS).</text>
</comment>
<comment type="disruption phenotype">
    <text evidence="7">Embryonic lethal at 11.5 dpc.</text>
</comment>
<comment type="similarity">
    <text evidence="11">Belongs to the SAC3 family.</text>
</comment>
<gene>
    <name type="primary">Mcm3ap</name>
    <name type="synonym">Ganp</name>
    <name type="synonym">Map80</name>
</gene>
<reference key="1">
    <citation type="journal article" date="2000" name="Blood">
        <title>A novel nuclear phosphoprotein, GANP, is up-regulated in centrocytes of the germinal center and associated with MCM3, a protein essential for DNA replication.</title>
        <authorList>
            <person name="Kuwahara K."/>
            <person name="Yoshida M."/>
            <person name="Kondo E."/>
            <person name="Sakata A."/>
            <person name="Watanabe Y."/>
            <person name="Abe E."/>
            <person name="Kouno Y."/>
            <person name="Tomiyasu S."/>
            <person name="Fujimura S."/>
            <person name="Tokuhisa T."/>
            <person name="Kimura H."/>
            <person name="Ezaki T."/>
            <person name="Sakaguchi N."/>
        </authorList>
    </citation>
    <scope>NUCLEOTIDE SEQUENCE [MRNA]</scope>
    <scope>INTERACTION WITH MCM3</scope>
    <scope>SUBCELLULAR LOCATION</scope>
    <scope>TISSUE SPECIFICITY</scope>
    <scope>INDUCTION BY CD40 STIMULATION</scope>
    <source>
        <strain>BALB/c X NZB</strain>
    </source>
</reference>
<reference key="2">
    <citation type="submission" date="2005-09" db="EMBL/GenBank/DDBJ databases">
        <authorList>
            <person name="Mural R.J."/>
            <person name="Adams M.D."/>
            <person name="Myers E.W."/>
            <person name="Smith H.O."/>
            <person name="Venter J.C."/>
        </authorList>
    </citation>
    <scope>NUCLEOTIDE SEQUENCE [LARGE SCALE GENOMIC DNA]</scope>
</reference>
<reference key="3">
    <citation type="journal article" date="2004" name="Genome Res.">
        <title>The status, quality, and expansion of the NIH full-length cDNA project: the Mammalian Gene Collection (MGC).</title>
        <authorList>
            <consortium name="The MGC Project Team"/>
        </authorList>
    </citation>
    <scope>NUCLEOTIDE SEQUENCE [LARGE SCALE MRNA]</scope>
    <source>
        <strain>C57BL/6J</strain>
        <tissue>Brain</tissue>
    </source>
</reference>
<reference key="4">
    <citation type="journal article" date="2001" name="Proc. Natl. Acad. Sci. U.S.A.">
        <title>Germinal center-associated nuclear protein (GANP) has a phosphorylation-dependent DNA-primase activity that is up-regulated in germinal center regions.</title>
        <authorList>
            <person name="Kuwahara K."/>
            <person name="Tomiyasu S."/>
            <person name="Fujimura S."/>
            <person name="Nomura K."/>
            <person name="Xing Y."/>
            <person name="Nishiyama N."/>
            <person name="Ogawa M."/>
            <person name="Imajoh-Ohmi S."/>
            <person name="Izuta S."/>
            <person name="Sakaguchi N."/>
        </authorList>
    </citation>
    <scope>INDUCTION BY CD40 STIMULATION AND LPS</scope>
    <scope>PHOSPHORYLATION AT SER-502</scope>
</reference>
<reference key="5">
    <citation type="journal article" date="2007" name="Genes Cells">
        <title>GANP suppresses DNA recombination, measured by direct-repeat beta-galactosidase gene construct, but does not suppress the type of recombination applying to immunoglobulin genes in mammalian cells.</title>
        <authorList>
            <person name="Yoshida M."/>
            <person name="Kuwahara K."/>
            <person name="Shimasaki T."/>
            <person name="Nakagata N."/>
            <person name="Matsuoka M."/>
            <person name="Sakaguchi N."/>
        </authorList>
    </citation>
    <scope>DISRUPTION PHENOTYPE</scope>
</reference>
<reference key="6">
    <citation type="journal article" date="2010" name="Cell">
        <title>A tissue-specific atlas of mouse protein phosphorylation and expression.</title>
        <authorList>
            <person name="Huttlin E.L."/>
            <person name="Jedrychowski M.P."/>
            <person name="Elias J.E."/>
            <person name="Goswami T."/>
            <person name="Rad R."/>
            <person name="Beausoleil S.A."/>
            <person name="Villen J."/>
            <person name="Haas W."/>
            <person name="Sowa M.E."/>
            <person name="Gygi S.P."/>
        </authorList>
    </citation>
    <scope>IDENTIFICATION BY MASS SPECTROMETRY [LARGE SCALE ANALYSIS]</scope>
    <source>
        <tissue>Spleen</tissue>
    </source>
</reference>
<reference key="7">
    <citation type="journal article" date="2010" name="J. Biol. Chem.">
        <title>GANP-mediated recruitment of activation-induced cytidine deaminase to cell nuclei and to immunoglobulin variable region DNA.</title>
        <authorList>
            <person name="Maeda K."/>
            <person name="Singh S.K."/>
            <person name="Eda K."/>
            <person name="Kitabatake M."/>
            <person name="Pham P."/>
            <person name="Goodman M.F."/>
            <person name="Sakaguchi N."/>
        </authorList>
    </citation>
    <scope>INTERACTION WITH AICDA</scope>
    <scope>SUBCELLULAR LOCATION</scope>
</reference>
<reference key="8">
    <citation type="journal article" date="2013" name="Nat. Commun.">
        <title>GANP regulates recruitment of AID to immunoglobulin variable regions by modulating transcription and nucleosome occupancy.</title>
        <authorList>
            <person name="Singh S.K."/>
            <person name="Maeda K."/>
            <person name="Eid M.M."/>
            <person name="Almofty S.A."/>
            <person name="Ono M."/>
            <person name="Pham P."/>
            <person name="Goodman M.F."/>
            <person name="Sakaguchi N."/>
        </authorList>
    </citation>
    <scope>FUNCTION</scope>
</reference>
<reference key="9">
    <citation type="journal article" date="2013" name="Proc. Natl. Acad. Sci. U.S.A.">
        <title>Label-free quantitative proteomics of the lysine acetylome in mitochondria identifies substrates of SIRT3 in metabolic pathways.</title>
        <authorList>
            <person name="Rardin M.J."/>
            <person name="Newman J.C."/>
            <person name="Held J.M."/>
            <person name="Cusack M.P."/>
            <person name="Sorensen D.J."/>
            <person name="Li B."/>
            <person name="Schilling B."/>
            <person name="Mooney S.D."/>
            <person name="Kahn C.R."/>
            <person name="Verdin E."/>
            <person name="Gibson B.W."/>
        </authorList>
    </citation>
    <scope>ACETYLATION [LARGE SCALE ANALYSIS] AT LYS-483 AND LYS-484</scope>
    <scope>IDENTIFICATION BY MASS SPECTROMETRY [LARGE SCALE ANALYSIS]</scope>
    <source>
        <tissue>Liver</tissue>
    </source>
</reference>
<reference key="10">
    <citation type="journal article" date="2014" name="Mol. Cell. Proteomics">
        <title>Immunoaffinity enrichment and mass spectrometry analysis of protein methylation.</title>
        <authorList>
            <person name="Guo A."/>
            <person name="Gu H."/>
            <person name="Zhou J."/>
            <person name="Mulhern D."/>
            <person name="Wang Y."/>
            <person name="Lee K.A."/>
            <person name="Yang V."/>
            <person name="Aguiar M."/>
            <person name="Kornhauser J."/>
            <person name="Jia X."/>
            <person name="Ren J."/>
            <person name="Beausoleil S.A."/>
            <person name="Silva J.C."/>
            <person name="Vemulapalli V."/>
            <person name="Bedford M.T."/>
            <person name="Comb M.J."/>
        </authorList>
    </citation>
    <scope>METHYLATION [LARGE SCALE ANALYSIS] AT ARG-32</scope>
    <scope>IDENTIFICATION BY MASS SPECTROMETRY [LARGE SCALE ANALYSIS]</scope>
    <source>
        <tissue>Brain</tissue>
        <tissue>Embryo</tissue>
    </source>
</reference>
<dbReference type="EC" id="2.3.1.48" evidence="1"/>
<dbReference type="EMBL" id="AJ006590">
    <property type="protein sequence ID" value="CAB44241.1"/>
    <property type="molecule type" value="mRNA"/>
</dbReference>
<dbReference type="EMBL" id="CH466553">
    <property type="protein sequence ID" value="EDL31849.1"/>
    <property type="molecule type" value="Genomic_DNA"/>
</dbReference>
<dbReference type="EMBL" id="BC052452">
    <property type="protein sequence ID" value="AAH52452.1"/>
    <property type="molecule type" value="mRNA"/>
</dbReference>
<dbReference type="CCDS" id="CCDS23947.1"/>
<dbReference type="RefSeq" id="NP_062307.2">
    <property type="nucleotide sequence ID" value="NM_019434.3"/>
</dbReference>
<dbReference type="SMR" id="Q9WUU9"/>
<dbReference type="BioGRID" id="207638">
    <property type="interactions" value="4"/>
</dbReference>
<dbReference type="FunCoup" id="Q9WUU9">
    <property type="interactions" value="5288"/>
</dbReference>
<dbReference type="IntAct" id="Q9WUU9">
    <property type="interactions" value="1"/>
</dbReference>
<dbReference type="STRING" id="10090.ENSMUSP00000125960"/>
<dbReference type="GlyGen" id="Q9WUU9">
    <property type="glycosylation" value="9 sites, 1 N-linked glycan (1 site), 1 O-linked glycan (4 sites)"/>
</dbReference>
<dbReference type="iPTMnet" id="Q9WUU9"/>
<dbReference type="PhosphoSitePlus" id="Q9WUU9"/>
<dbReference type="jPOST" id="Q9WUU9"/>
<dbReference type="PaxDb" id="10090-ENSMUSP00000125960"/>
<dbReference type="PeptideAtlas" id="Q9WUU9"/>
<dbReference type="ProteomicsDB" id="268847"/>
<dbReference type="Pumba" id="Q9WUU9"/>
<dbReference type="Antibodypedia" id="10636">
    <property type="antibodies" value="243 antibodies from 33 providers"/>
</dbReference>
<dbReference type="DNASU" id="54387"/>
<dbReference type="Ensembl" id="ENSMUST00000170795.3">
    <property type="protein sequence ID" value="ENSMUSP00000125960.2"/>
    <property type="gene ID" value="ENSMUSG00000001150.8"/>
</dbReference>
<dbReference type="GeneID" id="54387"/>
<dbReference type="KEGG" id="mmu:54387"/>
<dbReference type="UCSC" id="uc007fup.1">
    <property type="organism name" value="mouse"/>
</dbReference>
<dbReference type="AGR" id="MGI:1930089"/>
<dbReference type="CTD" id="8888"/>
<dbReference type="MGI" id="MGI:1930089">
    <property type="gene designation" value="Mcm3ap"/>
</dbReference>
<dbReference type="VEuPathDB" id="HostDB:ENSMUSG00000001150"/>
<dbReference type="eggNOG" id="KOG1860">
    <property type="taxonomic scope" value="Eukaryota"/>
</dbReference>
<dbReference type="GeneTree" id="ENSGT00940000156322"/>
<dbReference type="HOGENOM" id="CLU_001842_1_0_1"/>
<dbReference type="InParanoid" id="Q9WUU9"/>
<dbReference type="OMA" id="DMTIFWH"/>
<dbReference type="OrthoDB" id="21502at2759"/>
<dbReference type="TreeFam" id="TF105948"/>
<dbReference type="BioGRID-ORCS" id="54387">
    <property type="hits" value="24 hits in 82 CRISPR screens"/>
</dbReference>
<dbReference type="ChiTaRS" id="Mcm3ap">
    <property type="organism name" value="mouse"/>
</dbReference>
<dbReference type="PRO" id="PR:Q9WUU9"/>
<dbReference type="Proteomes" id="UP000000589">
    <property type="component" value="Chromosome 10"/>
</dbReference>
<dbReference type="RNAct" id="Q9WUU9">
    <property type="molecule type" value="protein"/>
</dbReference>
<dbReference type="Bgee" id="ENSMUSG00000001150">
    <property type="expression patterns" value="Expressed in saccule of membranous labyrinth and 272 other cell types or tissues"/>
</dbReference>
<dbReference type="ExpressionAtlas" id="Q9WUU9">
    <property type="expression patterns" value="baseline and differential"/>
</dbReference>
<dbReference type="GO" id="GO:0005694">
    <property type="term" value="C:chromosome"/>
    <property type="evidence" value="ECO:0007669"/>
    <property type="project" value="UniProtKB-SubCell"/>
</dbReference>
<dbReference type="GO" id="GO:0005737">
    <property type="term" value="C:cytoplasm"/>
    <property type="evidence" value="ECO:0000314"/>
    <property type="project" value="MGI"/>
</dbReference>
<dbReference type="GO" id="GO:0005829">
    <property type="term" value="C:cytosol"/>
    <property type="evidence" value="ECO:0007669"/>
    <property type="project" value="Ensembl"/>
</dbReference>
<dbReference type="GO" id="GO:0031965">
    <property type="term" value="C:nuclear membrane"/>
    <property type="evidence" value="ECO:0007669"/>
    <property type="project" value="Ensembl"/>
</dbReference>
<dbReference type="GO" id="GO:0044615">
    <property type="term" value="C:nuclear pore nuclear basket"/>
    <property type="evidence" value="ECO:0000250"/>
    <property type="project" value="UniProtKB"/>
</dbReference>
<dbReference type="GO" id="GO:0005654">
    <property type="term" value="C:nucleoplasm"/>
    <property type="evidence" value="ECO:0007669"/>
    <property type="project" value="UniProtKB-SubCell"/>
</dbReference>
<dbReference type="GO" id="GO:0005634">
    <property type="term" value="C:nucleus"/>
    <property type="evidence" value="ECO:0000314"/>
    <property type="project" value="MGI"/>
</dbReference>
<dbReference type="GO" id="GO:0070390">
    <property type="term" value="C:transcription export complex 2"/>
    <property type="evidence" value="ECO:0000250"/>
    <property type="project" value="UniProtKB"/>
</dbReference>
<dbReference type="GO" id="GO:0003682">
    <property type="term" value="F:chromatin binding"/>
    <property type="evidence" value="ECO:0000250"/>
    <property type="project" value="UniProtKB"/>
</dbReference>
<dbReference type="GO" id="GO:0004402">
    <property type="term" value="F:histone acetyltransferase activity"/>
    <property type="evidence" value="ECO:0000250"/>
    <property type="project" value="UniProtKB"/>
</dbReference>
<dbReference type="GO" id="GO:0042393">
    <property type="term" value="F:histone binding"/>
    <property type="evidence" value="ECO:0000250"/>
    <property type="project" value="UniProtKB"/>
</dbReference>
<dbReference type="GO" id="GO:0010484">
    <property type="term" value="F:histone H3 acetyltransferase activity"/>
    <property type="evidence" value="ECO:0000250"/>
    <property type="project" value="UniProtKB"/>
</dbReference>
<dbReference type="GO" id="GO:0003676">
    <property type="term" value="F:nucleic acid binding"/>
    <property type="evidence" value="ECO:0007669"/>
    <property type="project" value="InterPro"/>
</dbReference>
<dbReference type="GO" id="GO:0034728">
    <property type="term" value="P:nucleosome organization"/>
    <property type="evidence" value="ECO:0000250"/>
    <property type="project" value="UniProtKB"/>
</dbReference>
<dbReference type="GO" id="GO:0016973">
    <property type="term" value="P:poly(A)+ mRNA export from nucleus"/>
    <property type="evidence" value="ECO:0000250"/>
    <property type="project" value="UniProtKB"/>
</dbReference>
<dbReference type="GO" id="GO:0015031">
    <property type="term" value="P:protein transport"/>
    <property type="evidence" value="ECO:0007669"/>
    <property type="project" value="UniProtKB-KW"/>
</dbReference>
<dbReference type="GO" id="GO:0016446">
    <property type="term" value="P:somatic hypermutation of immunoglobulin genes"/>
    <property type="evidence" value="ECO:0000250"/>
    <property type="project" value="UniProtKB"/>
</dbReference>
<dbReference type="CDD" id="cd12443">
    <property type="entry name" value="RRM_MCM3A_like"/>
    <property type="match status" value="1"/>
</dbReference>
<dbReference type="FunFam" id="1.25.40.990:FF:000003">
    <property type="entry name" value="germinal-center associated nuclear protein isoform X2"/>
    <property type="match status" value="1"/>
</dbReference>
<dbReference type="Gene3D" id="1.25.40.990">
    <property type="match status" value="1"/>
</dbReference>
<dbReference type="Gene3D" id="6.10.250.1340">
    <property type="match status" value="1"/>
</dbReference>
<dbReference type="InterPro" id="IPR031910">
    <property type="entry name" value="GANP_CID_dom"/>
</dbReference>
<dbReference type="InterPro" id="IPR031907">
    <property type="entry name" value="MCM3AP_GANP"/>
</dbReference>
<dbReference type="InterPro" id="IPR034265">
    <property type="entry name" value="MCM3AP_RRM"/>
</dbReference>
<dbReference type="InterPro" id="IPR031908">
    <property type="entry name" value="NupH_GANP"/>
</dbReference>
<dbReference type="InterPro" id="IPR000717">
    <property type="entry name" value="PCI_dom"/>
</dbReference>
<dbReference type="InterPro" id="IPR035979">
    <property type="entry name" value="RBD_domain_sf"/>
</dbReference>
<dbReference type="InterPro" id="IPR045107">
    <property type="entry name" value="SAC3/GANP/THP3"/>
</dbReference>
<dbReference type="InterPro" id="IPR005062">
    <property type="entry name" value="SAC3/GANP/THP3_conserved"/>
</dbReference>
<dbReference type="PANTHER" id="PTHR12436">
    <property type="entry name" value="80 KDA MCM3-ASSOCIATED PROTEIN"/>
    <property type="match status" value="1"/>
</dbReference>
<dbReference type="PANTHER" id="PTHR12436:SF3">
    <property type="entry name" value="GERMINAL-CENTER ASSOCIATED NUCLEAR PROTEIN"/>
    <property type="match status" value="1"/>
</dbReference>
<dbReference type="Pfam" id="PF16766">
    <property type="entry name" value="CID_GANP"/>
    <property type="match status" value="1"/>
</dbReference>
<dbReference type="Pfam" id="PF16769">
    <property type="entry name" value="MCM3AP_GANP"/>
    <property type="match status" value="1"/>
</dbReference>
<dbReference type="Pfam" id="PF16768">
    <property type="entry name" value="NupH_GANP"/>
    <property type="match status" value="1"/>
</dbReference>
<dbReference type="Pfam" id="PF03399">
    <property type="entry name" value="SAC3_GANP"/>
    <property type="match status" value="1"/>
</dbReference>
<dbReference type="SUPFAM" id="SSF54928">
    <property type="entry name" value="RNA-binding domain, RBD"/>
    <property type="match status" value="1"/>
</dbReference>
<dbReference type="PROSITE" id="PS50250">
    <property type="entry name" value="PCI"/>
    <property type="match status" value="1"/>
</dbReference>
<feature type="chain" id="PRO_0000096285" description="Germinal-center associated nuclear protein">
    <location>
        <begin position="1"/>
        <end position="1971"/>
    </location>
</feature>
<feature type="domain" description="PCI" evidence="3">
    <location>
        <begin position="768"/>
        <end position="951"/>
    </location>
</feature>
<feature type="region of interest" description="Disordered" evidence="4">
    <location>
        <begin position="1"/>
        <end position="50"/>
    </location>
</feature>
<feature type="region of interest" description="FG-repeats">
    <location>
        <begin position="33"/>
        <end position="335"/>
    </location>
</feature>
<feature type="region of interest" description="Disordered" evidence="4">
    <location>
        <begin position="214"/>
        <end position="406"/>
    </location>
</feature>
<feature type="region of interest" description="DNA primase">
    <location>
        <begin position="414"/>
        <end position="550"/>
    </location>
</feature>
<feature type="region of interest" description="Disordered" evidence="4">
    <location>
        <begin position="1793"/>
        <end position="1840"/>
    </location>
</feature>
<feature type="coiled-coil region" evidence="2">
    <location>
        <begin position="1124"/>
        <end position="1162"/>
    </location>
</feature>
<feature type="compositionally biased region" description="Polar residues" evidence="4">
    <location>
        <begin position="8"/>
        <end position="29"/>
    </location>
</feature>
<feature type="compositionally biased region" description="Polar residues" evidence="4">
    <location>
        <begin position="38"/>
        <end position="50"/>
    </location>
</feature>
<feature type="compositionally biased region" description="Polar residues" evidence="4">
    <location>
        <begin position="214"/>
        <end position="224"/>
    </location>
</feature>
<feature type="compositionally biased region" description="Low complexity" evidence="4">
    <location>
        <begin position="232"/>
        <end position="253"/>
    </location>
</feature>
<feature type="compositionally biased region" description="Basic and acidic residues" evidence="4">
    <location>
        <begin position="288"/>
        <end position="321"/>
    </location>
</feature>
<feature type="compositionally biased region" description="Basic and acidic residues" evidence="4">
    <location>
        <begin position="342"/>
        <end position="359"/>
    </location>
</feature>
<feature type="modified residue" description="Asymmetric dimethylarginine" evidence="13">
    <location>
        <position position="32"/>
    </location>
</feature>
<feature type="modified residue" description="Phosphoserine" evidence="1">
    <location>
        <position position="424"/>
    </location>
</feature>
<feature type="modified residue" description="N6-acetyllysine" evidence="12">
    <location>
        <position position="483"/>
    </location>
</feature>
<feature type="modified residue" description="N6-acetyllysine" evidence="12">
    <location>
        <position position="484"/>
    </location>
</feature>
<feature type="modified residue" description="Phosphoserine" evidence="6">
    <location>
        <position position="502"/>
    </location>
</feature>
<feature type="modified residue" description="Phosphoserine" evidence="1">
    <location>
        <position position="531"/>
    </location>
</feature>
<feature type="modified residue" description="Phosphoserine" evidence="1">
    <location>
        <position position="550"/>
    </location>
</feature>
<feature type="sequence conflict" description="In Ref. 1; CAB44241." evidence="11" ref="1">
    <original>QQ</original>
    <variation>SS</variation>
    <location>
        <begin position="10"/>
        <end position="11"/>
    </location>
</feature>
<feature type="sequence conflict" description="In Ref. 1; CAB44241." evidence="11" ref="1">
    <original>V</original>
    <variation>L</variation>
    <location>
        <position position="1017"/>
    </location>
</feature>
<feature type="sequence conflict" description="In Ref. 1; CAB44241." evidence="11" ref="1">
    <original>E</original>
    <variation>K</variation>
    <location>
        <position position="1190"/>
    </location>
</feature>
<feature type="sequence conflict" description="In Ref. 1; CAB44241." evidence="11" ref="1">
    <original>R</original>
    <variation>G</variation>
    <location>
        <position position="1552"/>
    </location>
</feature>
<feature type="sequence conflict" description="In Ref. 1; CAB44241." evidence="11" ref="1">
    <original>V</original>
    <variation>A</variation>
    <location>
        <position position="1702"/>
    </location>
</feature>
<feature type="sequence conflict" description="In Ref. 1; CAB44241." evidence="11" ref="1">
    <original>L</original>
    <variation>S</variation>
    <location>
        <position position="1782"/>
    </location>
</feature>
<protein>
    <recommendedName>
        <fullName>Germinal-center associated nuclear protein</fullName>
        <shortName>GANP</shortName>
        <ecNumber evidence="1">2.3.1.48</ecNumber>
    </recommendedName>
    <alternativeName>
        <fullName evidence="10">GC-associated DNA primase</fullName>
    </alternativeName>
</protein>
<sequence length="1971" mass="217363">MHPVNPFGGQQPSAFAVSSSTTGTYQTKSPFRFGQPSLFGQNSTPSKSLAFSQVPSFATPSGGSHSSSLPAFGLTQTSSVGLFSSLESTPSFAATSSSSVPGNTAFSFKSTSSVGVFPSGATFGPETGEVAGSGFRKTEFKFKPLENAVFKPIPGPESEPEKTQSQISSGFFTFSHPVGSGSGGLTPFSFPQVTNSSVTSSSFIFSKPVTSNTPAFASPLSNQNVEEEKRVSTSAFGSSNSSFSTFPTASPGSLGEPFPANKPSLRQGCEEAISQVEPLPTLMKGLKRKEDQDRSPRRHCHEAAEDPDPLSRGDHPPDKRPVRLNRPRGGTLFGRTIQEVFKSNKEAGRLGSKESKESGFAEPGESDHAAVPGGSQSTMVPSRLPAVTKEEEESRDEKEDSLRGKSVRQSKRREEWIYSLGGVSSLELTAIQCKNIPDYLNDRAILEKHFSKIAKVQRVFTRRSKKLAVIHFFDHASAALARKKGKGLHKDVVIFWHKKKISPSKKLFPLKEKLGESEASQGIEDSPFQHSPLSKPIVRPAAGSLLSKSSPVKKPSLLKMHQFEADPFDSGSEGSEGLGSCVSSLSTLIGTVADTSEEKYRLLDQRDRIMRQARVKRTDLDKARAFVGTCPDMCPEKERYLRETRSQLSVFEVVPGTDQVDHAAAVKEYSRSSADQEEPLPHELRPSAVLSRTMDYLVTQIMDQKEGSLRDWYDFVWNRTRGIRKDITQQHLCDPLTVSLIEKCTRFHIHCAHFMCEEPMSSFDAKINNENMTKCLQSLKEMYQDLRNKGVFCASEAEFQGYNVLLNLNKGDILREVQQFHPDVRNSPEVNFAVQAFAALNSNNFVRFFKLVQSASYLNACLLHCYFNQIRKDALRALNVAYTVSTQRSTVFPLDGVVRMLLFRDSEEATNFLNYHGLTVADGCVELNRSAFLEPEGLCKARKSVFIGRKLTVSVGEVVNGGPLPPVPRHTPVCSFNSQNKYVGESLATELPISTQRAGGDPAGGGRGEDCEAEVDVPTLAVLPQPPPASSATPALHVQPLAPAAAPSLLQASTQPEVLLPKPAPVYSDSDLVQVVDELIQEALQVDCEEVSSAGAAYVAAALGVSNAAVEDLITAATTGILRHVAAEEVSMERQRLEEEKQRAEEERLKQERELMLTQLSEGLAAELTELTVTECVWETCSQELQSAVEIDQKVRVARCCEAVCAHLVDLFLAEEIFQTAKETLQELQCFCKYLQRWREAVAARKKFRRQMRAFPAAPCCVDVNDRLQALVPSAECPITEENLAKGLLDLGHAGKVGVSCTRLRRLRNKTAHQIKVQHFHQQLLRNAAWAPLDLPSIVSEHLPMKQKRRFWKLVLVLPDVEEQTPESPGRILENWLKVKFTGDDSMVGDIGDNAGDIQTLSVFNTLSSKGDQTVSVNVCIKVAHGTLSDSALDAVETQKDLLGTSGLMLLLPPKVKSEEVAEEELSWLSALLQLKQLLQAKPFQPALPLVVLVPSSRGDSAGRAVEDGLMLQDLVSAKLISDYIVVEIPDSVNDLQGTVKVSGAVQWLISRCPQALDLCCQTLVQYVEDGISREFSRRFFHDRRERRLASLPSQEPSTIIELFNSVLQFLASVVSSEQLCDISWPVMEFAEVGGSQLLPHLHWNSPEHLAWLKQAVLGFQLPQMDLPPPGAPWLPVCSMVIQYTSQIPSSSQTQPVLQSQVENLLCRTYQKWKNKSLSPGQELGPSVAEIPWDDIITLCINHKLRDWTPPRLPVTLEALSEDGQICVYFFKNLLRKYHVPLSWEQARMQTQRELQLSHGRSGMRSIHPPTSTFPTPLLHVHQKGKKKEESGREGSLSTEDLLRGASAEELLAQSLSSSLLEEKEENKRFEDQLQQWLSQDSQAFTESTRLPLYLPQTLVSFPDSIKTQTMVKTSTSPQNSGTGKQLRFSEASGSSLTEKLKLLERLIQSSRAEEAASELHLSALLEMVDM</sequence>
<organism>
    <name type="scientific">Mus musculus</name>
    <name type="common">Mouse</name>
    <dbReference type="NCBI Taxonomy" id="10090"/>
    <lineage>
        <taxon>Eukaryota</taxon>
        <taxon>Metazoa</taxon>
        <taxon>Chordata</taxon>
        <taxon>Craniata</taxon>
        <taxon>Vertebrata</taxon>
        <taxon>Euteleostomi</taxon>
        <taxon>Mammalia</taxon>
        <taxon>Eutheria</taxon>
        <taxon>Euarchontoglires</taxon>
        <taxon>Glires</taxon>
        <taxon>Rodentia</taxon>
        <taxon>Myomorpha</taxon>
        <taxon>Muroidea</taxon>
        <taxon>Muridae</taxon>
        <taxon>Murinae</taxon>
        <taxon>Mus</taxon>
        <taxon>Mus</taxon>
    </lineage>
</organism>
<name>GANP_MOUSE</name>
<accession>Q9WUU9</accession>
<accession>Q7TS87</accession>
<proteinExistence type="evidence at protein level"/>
<keyword id="KW-0007">Acetylation</keyword>
<keyword id="KW-0012">Acyltransferase</keyword>
<keyword id="KW-0158">Chromosome</keyword>
<keyword id="KW-0175">Coiled coil</keyword>
<keyword id="KW-0963">Cytoplasm</keyword>
<keyword id="KW-0391">Immunity</keyword>
<keyword id="KW-0488">Methylation</keyword>
<keyword id="KW-0509">mRNA transport</keyword>
<keyword id="KW-0906">Nuclear pore complex</keyword>
<keyword id="KW-0539">Nucleus</keyword>
<keyword id="KW-0597">Phosphoprotein</keyword>
<keyword id="KW-0653">Protein transport</keyword>
<keyword id="KW-1185">Reference proteome</keyword>
<keyword id="KW-0808">Transferase</keyword>
<keyword id="KW-0811">Translocation</keyword>
<keyword id="KW-0813">Transport</keyword>
<evidence type="ECO:0000250" key="1">
    <source>
        <dbReference type="UniProtKB" id="O60318"/>
    </source>
</evidence>
<evidence type="ECO:0000255" key="2"/>
<evidence type="ECO:0000255" key="3">
    <source>
        <dbReference type="PROSITE-ProRule" id="PRU01185"/>
    </source>
</evidence>
<evidence type="ECO:0000256" key="4">
    <source>
        <dbReference type="SAM" id="MobiDB-lite"/>
    </source>
</evidence>
<evidence type="ECO:0000269" key="5">
    <source>
    </source>
</evidence>
<evidence type="ECO:0000269" key="6">
    <source>
    </source>
</evidence>
<evidence type="ECO:0000269" key="7">
    <source>
    </source>
</evidence>
<evidence type="ECO:0000269" key="8">
    <source>
    </source>
</evidence>
<evidence type="ECO:0000269" key="9">
    <source>
    </source>
</evidence>
<evidence type="ECO:0000303" key="10">
    <source>
    </source>
</evidence>
<evidence type="ECO:0000305" key="11"/>
<evidence type="ECO:0007744" key="12">
    <source>
    </source>
</evidence>
<evidence type="ECO:0007744" key="13">
    <source>
    </source>
</evidence>